<feature type="signal peptide" evidence="2">
    <location>
        <begin position="1"/>
        <end position="23"/>
    </location>
</feature>
<feature type="chain" id="PRO_0000395236" description="Probable beta-galactosidase C">
    <location>
        <begin position="24"/>
        <end position="984"/>
    </location>
</feature>
<feature type="active site" description="Proton donor" evidence="2">
    <location>
        <position position="188"/>
    </location>
</feature>
<feature type="active site" description="Nucleophile" evidence="2">
    <location>
        <position position="287"/>
    </location>
</feature>
<feature type="binding site" evidence="1">
    <location>
        <position position="82"/>
    </location>
    <ligand>
        <name>substrate</name>
    </ligand>
</feature>
<feature type="binding site" evidence="1">
    <location>
        <position position="127"/>
    </location>
    <ligand>
        <name>substrate</name>
    </ligand>
</feature>
<feature type="binding site" evidence="1">
    <location>
        <position position="128"/>
    </location>
    <ligand>
        <name>substrate</name>
    </ligand>
</feature>
<feature type="binding site" evidence="1">
    <location>
        <position position="129"/>
    </location>
    <ligand>
        <name>substrate</name>
    </ligand>
</feature>
<feature type="binding site" evidence="1">
    <location>
        <position position="187"/>
    </location>
    <ligand>
        <name>substrate</name>
    </ligand>
</feature>
<feature type="binding site" evidence="1">
    <location>
        <position position="251"/>
    </location>
    <ligand>
        <name>substrate</name>
    </ligand>
</feature>
<feature type="binding site" evidence="1">
    <location>
        <position position="353"/>
    </location>
    <ligand>
        <name>substrate</name>
    </ligand>
</feature>
<feature type="glycosylation site" description="N-linked (GlcNAc...) asparagine" evidence="2">
    <location>
        <position position="197"/>
    </location>
</feature>
<feature type="glycosylation site" description="N-linked (GlcNAc...) asparagine" evidence="2">
    <location>
        <position position="276"/>
    </location>
</feature>
<feature type="glycosylation site" description="N-linked (GlcNAc...) asparagine" evidence="2">
    <location>
        <position position="391"/>
    </location>
</feature>
<feature type="glycosylation site" description="N-linked (GlcNAc...) asparagine" evidence="2">
    <location>
        <position position="421"/>
    </location>
</feature>
<feature type="glycosylation site" description="N-linked (GlcNAc...) asparagine" evidence="2">
    <location>
        <position position="434"/>
    </location>
</feature>
<feature type="glycosylation site" description="N-linked (GlcNAc...) asparagine" evidence="2">
    <location>
        <position position="517"/>
    </location>
</feature>
<feature type="glycosylation site" description="N-linked (GlcNAc...) asparagine" evidence="2">
    <location>
        <position position="602"/>
    </location>
</feature>
<feature type="glycosylation site" description="N-linked (GlcNAc...) asparagine" evidence="2">
    <location>
        <position position="677"/>
    </location>
</feature>
<feature type="glycosylation site" description="N-linked (GlcNAc...) asparagine" evidence="2">
    <location>
        <position position="715"/>
    </location>
</feature>
<feature type="glycosylation site" description="N-linked (GlcNAc...) asparagine" evidence="2">
    <location>
        <position position="720"/>
    </location>
</feature>
<feature type="glycosylation site" description="N-linked (GlcNAc...) asparagine" evidence="2">
    <location>
        <position position="759"/>
    </location>
</feature>
<feature type="glycosylation site" description="N-linked (GlcNAc...) asparagine" evidence="2">
    <location>
        <position position="805"/>
    </location>
</feature>
<feature type="disulfide bond" evidence="1">
    <location>
        <begin position="257"/>
        <end position="304"/>
    </location>
</feature>
<accession>B8N2I5</accession>
<proteinExistence type="inferred from homology"/>
<keyword id="KW-0119">Carbohydrate metabolism</keyword>
<keyword id="KW-1015">Disulfide bond</keyword>
<keyword id="KW-0325">Glycoprotein</keyword>
<keyword id="KW-0326">Glycosidase</keyword>
<keyword id="KW-0378">Hydrolase</keyword>
<keyword id="KW-0624">Polysaccharide degradation</keyword>
<keyword id="KW-0964">Secreted</keyword>
<keyword id="KW-0732">Signal</keyword>
<sequence>MRLLSFIYLVWLALLTGTPQVSATDNGKTSDVAWDKYSLSVKGERLFVFSGEFHYQRLPVPELWLDVFQKLRANGFNTISVYFFWSYHSASEDVFDFTTGAHDIQRLFDYAKQAGLYVIARAGPYCNAETSAGGFALWAANGQMGSERTSDEAYYKKWKPWILEVGKIIAANQITNGGPVILNQHENELQETTYDSNDTKVIYMEQVAKAFEEAGVVVPSSHNEKGMRTVSWSTDYKNVGGAVNVYGLDSYPGSLSCANPNSGFNLLRTYYQWFQNYSYTQPEYLAEFEGGWFQPWGGSFYDSCASELSPEFADVYYKNNIGSRVTLHNIYMTFGGTNWGHSAAPVVYTSYDYGSPLRETREIRDKLKQTKLLGLFTRVSKDLLKTYMEGNGTSYTSDDSIYTWALRNPDSDAGFYVVAHNTSSSREVTTFSLNITTSAGALTIPDIELDGRQSKIIVTDYSIGSESSLLYSSAEVLTYATLDVDVLVFYLNAGQKGAFVFKDAPADLKYQTYGNSNLSALETSQGTQYSYTQGEGVTAVKFSNGVLVYLLDKETAWNFFAPPTVSSPTVAPNEHILVFGPYLVRGASIKHDTVEIVGDNSNSTSIEIYTGDEHVKKVSWNGNLIDTRATAYGSLIGTVPGAEDIEISLPSLSSWKAQDTLPEISPDYDDSRWTICNKTTSVNSVAPLSLPVLYSGDYGYHTGTKIYRGRFDGQNATGANVTVQNGVAAGWAAWLNGAYVGGFSGDPDKVASWEVLKFNHSSLRSRDNVLTIITDYTGHDQNSQKPIGTQNPRGIMGATLIGGGNFTLWRIQGNAGGEKNIDPVRGPMNEGGLYGERMGWHLPGYQVPESALDSSPLEGVSGAEGRFYTTSFQLDLEEDLDVPIGLQLSAPAGTEAVVQIFMNGYQFGHYLPHIGPQSLFPFPPGVIYNRGQNSLAISMWALTDAGARLEQVELKAYAKYRSGFDFNRDWTYLQPGWKDRTEYA</sequence>
<comment type="function">
    <text evidence="1">Cleaves beta-linked terminal galactosyl residues from gangliosides, glycoproteins, and glycosaminoglycans.</text>
</comment>
<comment type="catalytic activity">
    <reaction>
        <text>Hydrolysis of terminal non-reducing beta-D-galactose residues in beta-D-galactosides.</text>
        <dbReference type="EC" id="3.2.1.23"/>
    </reaction>
</comment>
<comment type="subcellular location">
    <subcellularLocation>
        <location evidence="1">Secreted</location>
    </subcellularLocation>
</comment>
<comment type="similarity">
    <text evidence="3">Belongs to the glycosyl hydrolase 35 family.</text>
</comment>
<name>BGALC_ASPFN</name>
<reference key="1">
    <citation type="journal article" date="2015" name="Genome Announc.">
        <title>Genome sequence of Aspergillus flavus NRRL 3357, a strain that causes aflatoxin contamination of food and feed.</title>
        <authorList>
            <person name="Nierman W.C."/>
            <person name="Yu J."/>
            <person name="Fedorova-Abrams N.D."/>
            <person name="Losada L."/>
            <person name="Cleveland T.E."/>
            <person name="Bhatnagar D."/>
            <person name="Bennett J.W."/>
            <person name="Dean R."/>
            <person name="Payne G.A."/>
        </authorList>
    </citation>
    <scope>NUCLEOTIDE SEQUENCE [LARGE SCALE GENOMIC DNA]</scope>
    <source>
        <strain>ATCC 200026 / FGSC A1120 / IAM 13836 / NRRL 3357 / JCM 12722 / SRRC 167</strain>
    </source>
</reference>
<organism>
    <name type="scientific">Aspergillus flavus (strain ATCC 200026 / FGSC A1120 / IAM 13836 / NRRL 3357 / JCM 12722 / SRRC 167)</name>
    <dbReference type="NCBI Taxonomy" id="332952"/>
    <lineage>
        <taxon>Eukaryota</taxon>
        <taxon>Fungi</taxon>
        <taxon>Dikarya</taxon>
        <taxon>Ascomycota</taxon>
        <taxon>Pezizomycotina</taxon>
        <taxon>Eurotiomycetes</taxon>
        <taxon>Eurotiomycetidae</taxon>
        <taxon>Eurotiales</taxon>
        <taxon>Aspergillaceae</taxon>
        <taxon>Aspergillus</taxon>
        <taxon>Aspergillus subgen. Circumdati</taxon>
    </lineage>
</organism>
<gene>
    <name type="primary">lacC</name>
    <name type="ORF">AFLA_037600</name>
</gene>
<evidence type="ECO:0000250" key="1"/>
<evidence type="ECO:0000255" key="2"/>
<evidence type="ECO:0000305" key="3"/>
<protein>
    <recommendedName>
        <fullName>Probable beta-galactosidase C</fullName>
        <ecNumber>3.2.1.23</ecNumber>
    </recommendedName>
    <alternativeName>
        <fullName>Lactase C</fullName>
    </alternativeName>
</protein>
<dbReference type="EC" id="3.2.1.23"/>
<dbReference type="EMBL" id="EQ963473">
    <property type="protein sequence ID" value="EED56486.1"/>
    <property type="molecule type" value="Genomic_DNA"/>
</dbReference>
<dbReference type="RefSeq" id="XP_002375268.1">
    <property type="nucleotide sequence ID" value="XM_002375227.1"/>
</dbReference>
<dbReference type="SMR" id="B8N2I5"/>
<dbReference type="STRING" id="332952.B8N2I5"/>
<dbReference type="GlyCosmos" id="B8N2I5">
    <property type="glycosylation" value="12 sites, No reported glycans"/>
</dbReference>
<dbReference type="EnsemblFungi" id="EED56486">
    <property type="protein sequence ID" value="EED56486"/>
    <property type="gene ID" value="AFLA_037600"/>
</dbReference>
<dbReference type="VEuPathDB" id="FungiDB:AFLA_001654"/>
<dbReference type="eggNOG" id="KOG0496">
    <property type="taxonomic scope" value="Eukaryota"/>
</dbReference>
<dbReference type="HOGENOM" id="CLU_005732_2_1_1"/>
<dbReference type="OMA" id="PEFEGGW"/>
<dbReference type="GO" id="GO:0005576">
    <property type="term" value="C:extracellular region"/>
    <property type="evidence" value="ECO:0007669"/>
    <property type="project" value="UniProtKB-SubCell"/>
</dbReference>
<dbReference type="GO" id="GO:0004565">
    <property type="term" value="F:beta-galactosidase activity"/>
    <property type="evidence" value="ECO:0007669"/>
    <property type="project" value="UniProtKB-EC"/>
</dbReference>
<dbReference type="GO" id="GO:0000272">
    <property type="term" value="P:polysaccharide catabolic process"/>
    <property type="evidence" value="ECO:0007669"/>
    <property type="project" value="UniProtKB-KW"/>
</dbReference>
<dbReference type="FunFam" id="2.102.20.10:FF:000001">
    <property type="entry name" value="Beta-galactosidase A"/>
    <property type="match status" value="1"/>
</dbReference>
<dbReference type="FunFam" id="2.60.120.260:FF:000065">
    <property type="entry name" value="Beta-galactosidase A"/>
    <property type="match status" value="1"/>
</dbReference>
<dbReference type="FunFam" id="3.20.20.80:FF:000040">
    <property type="entry name" value="Beta-galactosidase A"/>
    <property type="match status" value="1"/>
</dbReference>
<dbReference type="FunFam" id="2.60.120.260:FF:000144">
    <property type="entry name" value="Probable beta-galactosidase C"/>
    <property type="match status" value="1"/>
</dbReference>
<dbReference type="Gene3D" id="2.102.20.10">
    <property type="entry name" value="Beta-galactosidase, domain 2"/>
    <property type="match status" value="1"/>
</dbReference>
<dbReference type="Gene3D" id="2.60.390.10">
    <property type="entry name" value="Beta-galactosidase, domain 3"/>
    <property type="match status" value="1"/>
</dbReference>
<dbReference type="Gene3D" id="2.60.120.260">
    <property type="entry name" value="Galactose-binding domain-like"/>
    <property type="match status" value="2"/>
</dbReference>
<dbReference type="Gene3D" id="3.20.20.80">
    <property type="entry name" value="Glycosidases"/>
    <property type="match status" value="1"/>
</dbReference>
<dbReference type="InterPro" id="IPR018954">
    <property type="entry name" value="Betagal_dom2"/>
</dbReference>
<dbReference type="InterPro" id="IPR037110">
    <property type="entry name" value="Betagal_dom2_sf"/>
</dbReference>
<dbReference type="InterPro" id="IPR025972">
    <property type="entry name" value="BetaGal_dom3"/>
</dbReference>
<dbReference type="InterPro" id="IPR036833">
    <property type="entry name" value="BetaGal_dom3_sf"/>
</dbReference>
<dbReference type="InterPro" id="IPR025300">
    <property type="entry name" value="BetaGal_jelly_roll_dom"/>
</dbReference>
<dbReference type="InterPro" id="IPR008979">
    <property type="entry name" value="Galactose-bd-like_sf"/>
</dbReference>
<dbReference type="InterPro" id="IPR031330">
    <property type="entry name" value="Gly_Hdrlase_35_cat"/>
</dbReference>
<dbReference type="InterPro" id="IPR001944">
    <property type="entry name" value="Glycoside_Hdrlase_35"/>
</dbReference>
<dbReference type="InterPro" id="IPR017853">
    <property type="entry name" value="Glycoside_hydrolase_SF"/>
</dbReference>
<dbReference type="PANTHER" id="PTHR23421">
    <property type="entry name" value="BETA-GALACTOSIDASE RELATED"/>
    <property type="match status" value="1"/>
</dbReference>
<dbReference type="Pfam" id="PF13364">
    <property type="entry name" value="BetaGal_ABD2"/>
    <property type="match status" value="2"/>
</dbReference>
<dbReference type="Pfam" id="PF10435">
    <property type="entry name" value="BetaGal_dom2"/>
    <property type="match status" value="1"/>
</dbReference>
<dbReference type="Pfam" id="PF13363">
    <property type="entry name" value="BetaGal_dom3"/>
    <property type="match status" value="1"/>
</dbReference>
<dbReference type="Pfam" id="PF01301">
    <property type="entry name" value="Glyco_hydro_35"/>
    <property type="match status" value="1"/>
</dbReference>
<dbReference type="PRINTS" id="PR00742">
    <property type="entry name" value="GLHYDRLASE35"/>
</dbReference>
<dbReference type="SMART" id="SM01029">
    <property type="entry name" value="BetaGal_dom2"/>
    <property type="match status" value="1"/>
</dbReference>
<dbReference type="SUPFAM" id="SSF51445">
    <property type="entry name" value="(Trans)glycosidases"/>
    <property type="match status" value="1"/>
</dbReference>
<dbReference type="SUPFAM" id="SSF117100">
    <property type="entry name" value="Beta-galactosidase LacA, domain 3"/>
    <property type="match status" value="1"/>
</dbReference>
<dbReference type="SUPFAM" id="SSF49785">
    <property type="entry name" value="Galactose-binding domain-like"/>
    <property type="match status" value="2"/>
</dbReference>
<dbReference type="SUPFAM" id="SSF51011">
    <property type="entry name" value="Glycosyl hydrolase domain"/>
    <property type="match status" value="1"/>
</dbReference>